<evidence type="ECO:0000269" key="1">
    <source>
    </source>
</evidence>
<evidence type="ECO:0000303" key="2">
    <source>
    </source>
</evidence>
<evidence type="ECO:0000305" key="3"/>
<sequence length="10" mass="1234">MEKGYYDLES</sequence>
<organism>
    <name type="scientific">Solanum lycopersicum</name>
    <name type="common">Tomato</name>
    <name type="synonym">Lycopersicon esculentum</name>
    <dbReference type="NCBI Taxonomy" id="4081"/>
    <lineage>
        <taxon>Eukaryota</taxon>
        <taxon>Viridiplantae</taxon>
        <taxon>Streptophyta</taxon>
        <taxon>Embryophyta</taxon>
        <taxon>Tracheophyta</taxon>
        <taxon>Spermatophyta</taxon>
        <taxon>Magnoliopsida</taxon>
        <taxon>eudicotyledons</taxon>
        <taxon>Gunneridae</taxon>
        <taxon>Pentapetalae</taxon>
        <taxon>asterids</taxon>
        <taxon>lamiids</taxon>
        <taxon>Solanales</taxon>
        <taxon>Solanaceae</taxon>
        <taxon>Solanoideae</taxon>
        <taxon>Solaneae</taxon>
        <taxon>Solanum</taxon>
        <taxon>Solanum subgen. Lycopersicon</taxon>
    </lineage>
</organism>
<dbReference type="InParanoid" id="P80811"/>
<dbReference type="Proteomes" id="UP000004994">
    <property type="component" value="Unplaced"/>
</dbReference>
<dbReference type="GO" id="GO:0005576">
    <property type="term" value="C:extracellular region"/>
    <property type="evidence" value="ECO:0007669"/>
    <property type="project" value="UniProtKB-KW"/>
</dbReference>
<comment type="subcellular location">
    <subcellularLocation>
        <location evidence="1">Secreted</location>
        <location evidence="1">Cell wall</location>
    </subcellularLocation>
</comment>
<accession>P80811</accession>
<proteinExistence type="evidence at protein level"/>
<feature type="chain" id="PRO_0000079674" description="62 kDa cell wall protein">
    <location>
        <begin position="1"/>
        <end position="10" status="greater than"/>
    </location>
</feature>
<feature type="non-terminal residue" evidence="2">
    <location>
        <position position="10"/>
    </location>
</feature>
<reference evidence="3" key="1">
    <citation type="journal article" date="1997" name="J. Biol. Chem.">
        <title>Differential extraction and protein sequencing reveals major differences in patterns of primary cell wall proteins from plants.</title>
        <authorList>
            <person name="Robertson D."/>
            <person name="Mitchell G.P."/>
            <person name="Gilroy J.S."/>
            <person name="Gerrish C."/>
            <person name="Bolwell G.P."/>
            <person name="Slabas A.R."/>
        </authorList>
    </citation>
    <scope>PROTEIN SEQUENCE</scope>
    <scope>SUBCELLULAR LOCATION</scope>
</reference>
<protein>
    <recommendedName>
        <fullName>62 kDa cell wall protein</fullName>
    </recommendedName>
</protein>
<name>CWP15_SOLLC</name>
<keyword id="KW-0134">Cell wall</keyword>
<keyword id="KW-0903">Direct protein sequencing</keyword>
<keyword id="KW-1185">Reference proteome</keyword>
<keyword id="KW-0964">Secreted</keyword>